<sequence>MPPKSLSNLSQTAGVNQSGFFPGASERDFLPATDRTTAEFVIRCVIPSLYLLIITVGLLGNIVLVKIFLTNSAMRSVPNIFISNLAAGDVLLLLTCVPVDASRYFLDEWMFGKVGCKLIPVIQLTSVGVSVFTLTALSADRYRAIVNPMDIQTSGAVLWTCVKAGGIWVVSVLLAVPEAVFSEVARIDGLDNGSFTACIPYPQTDELHPKIHSVLIFLVYFLIPLGIISVYYYHIAKTLIKSAHNLPGEYNEHTKKQMETRKRLAKIVLVFVGCFVFCWFPNHILYMYRSFNYNEIDPSLGHMIVTLVARVLSFCNSCVNPFALYLLSESFRKHFNNQLCCGRKSYRERSPSYLLSSSAVRMTSLKSNAKNIVTNSVVPNGHSVKQEMAL</sequence>
<reference evidence="11" key="1">
    <citation type="journal article" date="2016" name="PLoS ONE">
        <title>Neuromedin B and Its Receptor: Gene Cloning, Tissue Distribution and Expression Levels of the Reproductive Axis in Pigs.</title>
        <authorList>
            <person name="Ma Z."/>
            <person name="Su J."/>
            <person name="Guo T."/>
            <person name="Jin M."/>
            <person name="Li X."/>
            <person name="Lei Z."/>
            <person name="Hou Y."/>
            <person name="Li X."/>
            <person name="Jia C."/>
            <person name="Zhang Z."/>
            <person name="Ahmed E."/>
        </authorList>
    </citation>
    <scope>NUCLEOTIDE SEQUENCE [MRNA]</scope>
    <scope>TISSUE SPECIFICITY</scope>
    <scope>DEVELOPMENTAL STAGE</scope>
</reference>
<reference evidence="10" key="2">
    <citation type="submission" date="2008-04" db="EMBL/GenBank/DDBJ databases">
        <authorList>
            <person name="Wang J."/>
            <person name="Yang G.-Y."/>
            <person name="Li H.-J."/>
            <person name="Wang Y.-L."/>
            <person name="Zhao W.-D."/>
            <person name="Wang W.-J."/>
        </authorList>
    </citation>
    <scope>NUCLEOTIDE SEQUENCE [MRNA]</scope>
</reference>
<reference evidence="12" key="3">
    <citation type="submission" date="2009-11" db="EMBL/GenBank/DDBJ databases">
        <authorList>
            <consortium name="Porcine genome sequencing project"/>
        </authorList>
    </citation>
    <scope>NUCLEOTIDE SEQUENCE [LARGE SCALE GENOMIC DNA]</scope>
    <source>
        <strain evidence="12">Duroc</strain>
    </source>
</reference>
<reference key="4">
    <citation type="journal article" date="2018" name="J. Mol. Endocrinol.">
        <title>Effects of neuromedin B on steroidogenesis, cell proliferation and apoptosis in porcine Leydig cells.</title>
        <authorList>
            <person name="Ma Z."/>
            <person name="Zhang Y."/>
            <person name="Su J."/>
            <person name="Yang S."/>
            <person name="Qiao W."/>
            <person name="Li X."/>
            <person name="Lei Z."/>
            <person name="Cheng L."/>
            <person name="An N."/>
            <person name="Wang W."/>
            <person name="Feng Y."/>
            <person name="Zhang J."/>
        </authorList>
    </citation>
    <scope>TISSUE SPECIFICITY</scope>
</reference>
<keyword id="KW-1003">Cell membrane</keyword>
<keyword id="KW-1015">Disulfide bond</keyword>
<keyword id="KW-0297">G-protein coupled receptor</keyword>
<keyword id="KW-0325">Glycoprotein</keyword>
<keyword id="KW-0449">Lipoprotein</keyword>
<keyword id="KW-0472">Membrane</keyword>
<keyword id="KW-0564">Palmitate</keyword>
<keyword id="KW-0597">Phosphoprotein</keyword>
<keyword id="KW-0675">Receptor</keyword>
<keyword id="KW-1185">Reference proteome</keyword>
<keyword id="KW-0807">Transducer</keyword>
<keyword id="KW-0812">Transmembrane</keyword>
<keyword id="KW-1133">Transmembrane helix</keyword>
<dbReference type="EMBL" id="KM058699">
    <property type="protein sequence ID" value="AIR07401.1"/>
    <property type="molecule type" value="mRNA"/>
</dbReference>
<dbReference type="EMBL" id="EU670045">
    <property type="protein sequence ID" value="ACD50931.1"/>
    <property type="molecule type" value="mRNA"/>
</dbReference>
<dbReference type="EMBL" id="AEMK02000001">
    <property type="status" value="NOT_ANNOTATED_CDS"/>
    <property type="molecule type" value="Genomic_DNA"/>
</dbReference>
<dbReference type="RefSeq" id="NP_001121961.1">
    <property type="nucleotide sequence ID" value="NM_001128489.1"/>
</dbReference>
<dbReference type="SMR" id="B2ZI34"/>
<dbReference type="FunCoup" id="B2ZI34">
    <property type="interactions" value="82"/>
</dbReference>
<dbReference type="STRING" id="9823.ENSSSCP00000056848"/>
<dbReference type="GlyCosmos" id="B2ZI34">
    <property type="glycosylation" value="3 sites, No reported glycans"/>
</dbReference>
<dbReference type="GlyGen" id="B2ZI34">
    <property type="glycosylation" value="3 sites"/>
</dbReference>
<dbReference type="PaxDb" id="9823-ENSSSCP00000004473"/>
<dbReference type="Ensembl" id="ENSSSCT00015072556.1">
    <property type="protein sequence ID" value="ENSSSCP00015029109.1"/>
    <property type="gene ID" value="ENSSSCG00015054424.1"/>
</dbReference>
<dbReference type="Ensembl" id="ENSSSCT00025015717.1">
    <property type="protein sequence ID" value="ENSSSCP00025006226.1"/>
    <property type="gene ID" value="ENSSSCG00025011882.1"/>
</dbReference>
<dbReference type="Ensembl" id="ENSSSCT00035096923.1">
    <property type="protein sequence ID" value="ENSSSCP00035040861.1"/>
    <property type="gene ID" value="ENSSSCG00035071663.1"/>
</dbReference>
<dbReference type="Ensembl" id="ENSSSCT00040016579.1">
    <property type="protein sequence ID" value="ENSSSCP00040006663.1"/>
    <property type="gene ID" value="ENSSSCG00040012537.1"/>
</dbReference>
<dbReference type="Ensembl" id="ENSSSCT00045031812.1">
    <property type="protein sequence ID" value="ENSSSCP00045022034.1"/>
    <property type="gene ID" value="ENSSSCG00045018702.1"/>
</dbReference>
<dbReference type="Ensembl" id="ENSSSCT00055058408.1">
    <property type="protein sequence ID" value="ENSSSCP00055046743.1"/>
    <property type="gene ID" value="ENSSSCG00055029411.1"/>
</dbReference>
<dbReference type="Ensembl" id="ENSSSCT00060046354.1">
    <property type="protein sequence ID" value="ENSSSCP00060019851.1"/>
    <property type="gene ID" value="ENSSSCG00060034182.1"/>
</dbReference>
<dbReference type="Ensembl" id="ENSSSCT00065091742.1">
    <property type="protein sequence ID" value="ENSSSCP00065040157.1"/>
    <property type="gene ID" value="ENSSSCG00065066840.1"/>
</dbReference>
<dbReference type="Ensembl" id="ENSSSCT00115002613">
    <property type="protein sequence ID" value="ENSSSCP00115002435"/>
    <property type="gene ID" value="ENSSSCG00115001541"/>
</dbReference>
<dbReference type="GeneID" id="100169653"/>
<dbReference type="KEGG" id="ssc:100169653"/>
<dbReference type="CTD" id="4829"/>
<dbReference type="eggNOG" id="KOG3656">
    <property type="taxonomic scope" value="Eukaryota"/>
</dbReference>
<dbReference type="HOGENOM" id="CLU_009579_6_2_1"/>
<dbReference type="InParanoid" id="B2ZI34"/>
<dbReference type="OrthoDB" id="10049706at2759"/>
<dbReference type="TreeFam" id="TF331292"/>
<dbReference type="Reactome" id="R-SSC-375276">
    <property type="pathway name" value="Peptide ligand-binding receptors"/>
</dbReference>
<dbReference type="Reactome" id="R-SSC-416476">
    <property type="pathway name" value="G alpha (q) signalling events"/>
</dbReference>
<dbReference type="Proteomes" id="UP000008227">
    <property type="component" value="Unplaced"/>
</dbReference>
<dbReference type="Proteomes" id="UP000314985">
    <property type="component" value="Unplaced"/>
</dbReference>
<dbReference type="Proteomes" id="UP000694570">
    <property type="component" value="Unplaced"/>
</dbReference>
<dbReference type="Proteomes" id="UP000694571">
    <property type="component" value="Unplaced"/>
</dbReference>
<dbReference type="Proteomes" id="UP000694720">
    <property type="component" value="Unplaced"/>
</dbReference>
<dbReference type="Proteomes" id="UP000694722">
    <property type="component" value="Unplaced"/>
</dbReference>
<dbReference type="Proteomes" id="UP000694723">
    <property type="component" value="Unplaced"/>
</dbReference>
<dbReference type="Proteomes" id="UP000694724">
    <property type="component" value="Unplaced"/>
</dbReference>
<dbReference type="Proteomes" id="UP000694725">
    <property type="component" value="Unplaced"/>
</dbReference>
<dbReference type="Proteomes" id="UP000694726">
    <property type="component" value="Unplaced"/>
</dbReference>
<dbReference type="Proteomes" id="UP000694727">
    <property type="component" value="Unplaced"/>
</dbReference>
<dbReference type="Proteomes" id="UP000694728">
    <property type="component" value="Unplaced"/>
</dbReference>
<dbReference type="Bgee" id="ENSSSCG00000036250">
    <property type="expression patterns" value="Expressed in medulla oblongata and 4 other cell types or tissues"/>
</dbReference>
<dbReference type="GO" id="GO:0005886">
    <property type="term" value="C:plasma membrane"/>
    <property type="evidence" value="ECO:0000318"/>
    <property type="project" value="GO_Central"/>
</dbReference>
<dbReference type="GO" id="GO:0004946">
    <property type="term" value="F:bombesin receptor activity"/>
    <property type="evidence" value="ECO:0007669"/>
    <property type="project" value="InterPro"/>
</dbReference>
<dbReference type="GO" id="GO:0008188">
    <property type="term" value="F:neuropeptide receptor activity"/>
    <property type="evidence" value="ECO:0000318"/>
    <property type="project" value="GO_Central"/>
</dbReference>
<dbReference type="GO" id="GO:0140374">
    <property type="term" value="P:antiviral innate immune response"/>
    <property type="evidence" value="ECO:0000250"/>
    <property type="project" value="UniProtKB"/>
</dbReference>
<dbReference type="GO" id="GO:0007186">
    <property type="term" value="P:G protein-coupled receptor signaling pathway"/>
    <property type="evidence" value="ECO:0000318"/>
    <property type="project" value="GO_Central"/>
</dbReference>
<dbReference type="GO" id="GO:0032715">
    <property type="term" value="P:negative regulation of interleukin-6 production"/>
    <property type="evidence" value="ECO:0000250"/>
    <property type="project" value="UniProtKB"/>
</dbReference>
<dbReference type="GO" id="GO:0090290">
    <property type="term" value="P:positive regulation of osteoclast proliferation"/>
    <property type="evidence" value="ECO:0000250"/>
    <property type="project" value="UniProtKB"/>
</dbReference>
<dbReference type="GO" id="GO:0160023">
    <property type="term" value="P:sneeze reflex"/>
    <property type="evidence" value="ECO:0000250"/>
    <property type="project" value="UniProtKB"/>
</dbReference>
<dbReference type="CDD" id="cd15125">
    <property type="entry name" value="7tmA_NMBR"/>
    <property type="match status" value="1"/>
</dbReference>
<dbReference type="FunFam" id="1.20.1070.10:FF:000132">
    <property type="entry name" value="Neuromedin-B receptor"/>
    <property type="match status" value="1"/>
</dbReference>
<dbReference type="Gene3D" id="1.20.1070.10">
    <property type="entry name" value="Rhodopsin 7-helix transmembrane proteins"/>
    <property type="match status" value="1"/>
</dbReference>
<dbReference type="InterPro" id="IPR001556">
    <property type="entry name" value="Bombsn_rcpt-like"/>
</dbReference>
<dbReference type="InterPro" id="IPR000276">
    <property type="entry name" value="GPCR_Rhodpsn"/>
</dbReference>
<dbReference type="InterPro" id="IPR017452">
    <property type="entry name" value="GPCR_Rhodpsn_7TM"/>
</dbReference>
<dbReference type="InterPro" id="IPR001642">
    <property type="entry name" value="NeuroB_rcpt"/>
</dbReference>
<dbReference type="PANTHER" id="PTHR45695">
    <property type="entry name" value="LEUCOKININ RECEPTOR-RELATED"/>
    <property type="match status" value="1"/>
</dbReference>
<dbReference type="PANTHER" id="PTHR45695:SF8">
    <property type="entry name" value="NEUROMEDIN-B RECEPTOR"/>
    <property type="match status" value="1"/>
</dbReference>
<dbReference type="Pfam" id="PF00001">
    <property type="entry name" value="7tm_1"/>
    <property type="match status" value="1"/>
</dbReference>
<dbReference type="PRINTS" id="PR00358">
    <property type="entry name" value="BOMBESINR"/>
</dbReference>
<dbReference type="PRINTS" id="PR00237">
    <property type="entry name" value="GPCRRHODOPSN"/>
</dbReference>
<dbReference type="PRINTS" id="PR00639">
    <property type="entry name" value="NEUROMEDINBR"/>
</dbReference>
<dbReference type="SMART" id="SM01381">
    <property type="entry name" value="7TM_GPCR_Srsx"/>
    <property type="match status" value="1"/>
</dbReference>
<dbReference type="SUPFAM" id="SSF81321">
    <property type="entry name" value="Family A G protein-coupled receptor-like"/>
    <property type="match status" value="1"/>
</dbReference>
<dbReference type="PROSITE" id="PS00237">
    <property type="entry name" value="G_PROTEIN_RECEP_F1_1"/>
    <property type="match status" value="1"/>
</dbReference>
<dbReference type="PROSITE" id="PS50262">
    <property type="entry name" value="G_PROTEIN_RECEP_F1_2"/>
    <property type="match status" value="1"/>
</dbReference>
<feature type="chain" id="PRO_0000455614" description="Neuromedin-B receptor">
    <location>
        <begin position="1"/>
        <end position="390"/>
    </location>
</feature>
<feature type="topological domain" description="Extracellular" evidence="9">
    <location>
        <begin position="1"/>
        <end position="44"/>
    </location>
</feature>
<feature type="transmembrane region" description="Helical; Name=1" evidence="4">
    <location>
        <begin position="45"/>
        <end position="65"/>
    </location>
</feature>
<feature type="topological domain" description="Cytoplasmic" evidence="9">
    <location>
        <begin position="66"/>
        <end position="76"/>
    </location>
</feature>
<feature type="transmembrane region" description="Helical; Name=2" evidence="4">
    <location>
        <begin position="77"/>
        <end position="97"/>
    </location>
</feature>
<feature type="topological domain" description="Extracellular" evidence="9">
    <location>
        <begin position="98"/>
        <end position="117"/>
    </location>
</feature>
<feature type="transmembrane region" description="Helical; Name=3" evidence="4">
    <location>
        <begin position="118"/>
        <end position="138"/>
    </location>
</feature>
<feature type="topological domain" description="Cytoplasmic" evidence="9">
    <location>
        <begin position="139"/>
        <end position="155"/>
    </location>
</feature>
<feature type="transmembrane region" description="Helical; Name=4" evidence="4">
    <location>
        <begin position="156"/>
        <end position="176"/>
    </location>
</feature>
<feature type="topological domain" description="Extracellular" evidence="9">
    <location>
        <begin position="177"/>
        <end position="210"/>
    </location>
</feature>
<feature type="transmembrane region" description="Helical; Name=5" evidence="4">
    <location>
        <begin position="211"/>
        <end position="231"/>
    </location>
</feature>
<feature type="topological domain" description="Cytoplasmic" evidence="9">
    <location>
        <begin position="232"/>
        <end position="266"/>
    </location>
</feature>
<feature type="transmembrane region" description="Helical; Name=6" evidence="4">
    <location>
        <begin position="267"/>
        <end position="287"/>
    </location>
</feature>
<feature type="topological domain" description="Extracellular" evidence="9">
    <location>
        <begin position="288"/>
        <end position="305"/>
    </location>
</feature>
<feature type="transmembrane region" description="Helical; Name=7" evidence="4">
    <location>
        <begin position="306"/>
        <end position="328"/>
    </location>
</feature>
<feature type="topological domain" description="Cytoplasmic" evidence="9">
    <location>
        <begin position="329"/>
        <end position="390"/>
    </location>
</feature>
<feature type="modified residue" description="Phosphoserine" evidence="1">
    <location>
        <position position="352"/>
    </location>
</feature>
<feature type="lipid moiety-binding region" description="S-palmitoyl cysteine" evidence="2">
    <location>
        <position position="341"/>
    </location>
</feature>
<feature type="glycosylation site" description="N-linked (GlcNAc...) asparagine" evidence="4">
    <location>
        <position position="8"/>
    </location>
</feature>
<feature type="glycosylation site" description="N-linked (GlcNAc...) asparagine" evidence="4">
    <location>
        <position position="16"/>
    </location>
</feature>
<feature type="glycosylation site" description="N-linked (GlcNAc...) asparagine" evidence="4">
    <location>
        <position position="192"/>
    </location>
</feature>
<feature type="disulfide bond" evidence="5">
    <location>
        <begin position="116"/>
        <end position="198"/>
    </location>
</feature>
<proteinExistence type="evidence at protein level"/>
<gene>
    <name type="primary">NMBR</name>
</gene>
<organism evidence="10">
    <name type="scientific">Sus scrofa</name>
    <name type="common">Pig</name>
    <dbReference type="NCBI Taxonomy" id="9823"/>
    <lineage>
        <taxon>Eukaryota</taxon>
        <taxon>Metazoa</taxon>
        <taxon>Chordata</taxon>
        <taxon>Craniata</taxon>
        <taxon>Vertebrata</taxon>
        <taxon>Euteleostomi</taxon>
        <taxon>Mammalia</taxon>
        <taxon>Eutheria</taxon>
        <taxon>Laurasiatheria</taxon>
        <taxon>Artiodactyla</taxon>
        <taxon>Suina</taxon>
        <taxon>Suidae</taxon>
        <taxon>Sus</taxon>
    </lineage>
</organism>
<evidence type="ECO:0000250" key="1">
    <source>
        <dbReference type="UniProtKB" id="O54799"/>
    </source>
</evidence>
<evidence type="ECO:0000250" key="2">
    <source>
        <dbReference type="UniProtKB" id="P21917"/>
    </source>
</evidence>
<evidence type="ECO:0000250" key="3">
    <source>
        <dbReference type="UniProtKB" id="P28336"/>
    </source>
</evidence>
<evidence type="ECO:0000255" key="4"/>
<evidence type="ECO:0000255" key="5">
    <source>
        <dbReference type="PROSITE-ProRule" id="PRU00521"/>
    </source>
</evidence>
<evidence type="ECO:0000255" key="6">
    <source>
        <dbReference type="RuleBase" id="RU000688"/>
    </source>
</evidence>
<evidence type="ECO:0000269" key="7">
    <source>
    </source>
</evidence>
<evidence type="ECO:0000269" key="8">
    <source>
    </source>
</evidence>
<evidence type="ECO:0000305" key="9"/>
<evidence type="ECO:0000312" key="10">
    <source>
        <dbReference type="EMBL" id="ACD50931.1"/>
    </source>
</evidence>
<evidence type="ECO:0000312" key="11">
    <source>
        <dbReference type="EMBL" id="AIR07401.1"/>
    </source>
</evidence>
<evidence type="ECO:0000312" key="12">
    <source>
        <dbReference type="Proteomes" id="UP000008227"/>
    </source>
</evidence>
<protein>
    <recommendedName>
        <fullName evidence="10">Neuromedin-B receptor</fullName>
        <shortName evidence="9">NMB-R</shortName>
    </recommendedName>
    <alternativeName>
        <fullName evidence="9">Neuromedin-B-preferring bombesin receptor</fullName>
    </alternativeName>
</protein>
<name>NMBR_PIG</name>
<comment type="function">
    <text evidence="1 3">Receptor for neuromedin-B (By similarity). Contributes to the maintenance of basal sigh rate through signaling in the pre-Botzinger complex, a cluster of several thousand neurons in the ventrolateral medulla responsible for inspiration during respiratory activity (By similarity). Contributes to the induction of sneezing following exposure to chemical irritants or allergens which causes release of NMB by nasal sensory neurons and activation of NMBR-expressing neurons in the sneeze-evoking region of the brainstem (By similarity). These in turn activate neurons of the caudal ventral respiratory group, giving rise to the sneezing response (By similarity). Contributes to induction of acute itch, possibly through its activation on dorsal root ganglion neurons by the NMB peptide (By similarity). Plays a role in the innate immune response to influenza A virus infection by enhancing interferon alpha expression and reducing expression of IL6 (By similarity). Plays a role in CSF1-induced proliferation of osteoclast precursors by contributing to the positive regulation of the expression of the CSF1 receptor CSF1R (By similarity).</text>
</comment>
<comment type="subcellular location">
    <subcellularLocation>
        <location evidence="9">Cell membrane</location>
        <topology evidence="4">Multi-pass membrane protein</topology>
    </subcellularLocation>
</comment>
<comment type="tissue specificity">
    <text evidence="7 8">Highly expressed in peripheral tissues where it is detected in the respiratory system, circulatory system, digestive system, urogenital system, lymphatic organs and endocrine system (at protein level) (PubMed:27010315). In the testis, expressed mainly in Leydig cells (at protein level) (PubMed:29632025).</text>
</comment>
<comment type="developmental stage">
    <text evidence="7">During the sow estrus cycle, highest levels are found in the hypothalamus at proestrus and estrus with a significant drop at metestrus and an increase at diestrus. In the pituitary gland, expression increases from proestrus to estrus, drops at metestrus and increases at diestrus. In the ovary, expression increases from proestrus to estrus, drops at metestrus and remains at a similar level at diestrus. During boar postnatal development, expression peaks in the hypothalamus at day 30 and decreases thereafter. In the pituitary gland, expression peaks at day 60, drops slightly at day 90 and increases again at day 120. In the testis, expression drops from day 3 to day 30 with peak levels at day 90 and a decrease at day 120.</text>
</comment>
<comment type="similarity">
    <text evidence="6">Belongs to the G-protein coupled receptor 1 family.</text>
</comment>
<accession>B2ZI34</accession>
<accession>A0A287BJR5</accession>